<evidence type="ECO:0000250" key="1">
    <source>
        <dbReference type="UniProtKB" id="P82664"/>
    </source>
</evidence>
<evidence type="ECO:0000305" key="2"/>
<accession>Q80ZK0</accession>
<accession>Q4V9W5</accession>
<keyword id="KW-0002">3D-structure</keyword>
<keyword id="KW-0496">Mitochondrion</keyword>
<keyword id="KW-1185">Reference proteome</keyword>
<keyword id="KW-0687">Ribonucleoprotein</keyword>
<keyword id="KW-0689">Ribosomal protein</keyword>
<dbReference type="EMBL" id="BC048912">
    <property type="protein sequence ID" value="AAH48912.1"/>
    <property type="molecule type" value="mRNA"/>
</dbReference>
<dbReference type="EMBL" id="BC096657">
    <property type="protein sequence ID" value="AAH96657.1"/>
    <property type="molecule type" value="mRNA"/>
</dbReference>
<dbReference type="CCDS" id="CCDS28846.1"/>
<dbReference type="PDB" id="7PNT">
    <property type="method" value="EM"/>
    <property type="resolution" value="3.19 A"/>
    <property type="chains" value="H=1-160"/>
</dbReference>
<dbReference type="PDB" id="7PNU">
    <property type="method" value="EM"/>
    <property type="resolution" value="3.06 A"/>
    <property type="chains" value="H=1-160"/>
</dbReference>
<dbReference type="PDB" id="7PNV">
    <property type="method" value="EM"/>
    <property type="resolution" value="3.06 A"/>
    <property type="chains" value="H=1-160"/>
</dbReference>
<dbReference type="PDB" id="7PNW">
    <property type="method" value="EM"/>
    <property type="resolution" value="3.09 A"/>
    <property type="chains" value="H=1-160"/>
</dbReference>
<dbReference type="PDBsum" id="7PNT"/>
<dbReference type="PDBsum" id="7PNU"/>
<dbReference type="PDBsum" id="7PNV"/>
<dbReference type="PDBsum" id="7PNW"/>
<dbReference type="EMDB" id="EMD-13551"/>
<dbReference type="EMDB" id="EMD-13552"/>
<dbReference type="EMDB" id="EMD-13553"/>
<dbReference type="EMDB" id="EMD-13554"/>
<dbReference type="SMR" id="Q80ZK0"/>
<dbReference type="ComplexPortal" id="CPX-5301">
    <property type="entry name" value="28S mitochondrial small ribosomal subunit"/>
</dbReference>
<dbReference type="FunCoup" id="Q80ZK0">
    <property type="interactions" value="1407"/>
</dbReference>
<dbReference type="STRING" id="10090.ENSMUSP00000113343"/>
<dbReference type="PhosphoSitePlus" id="Q80ZK0"/>
<dbReference type="PaxDb" id="10090-ENSMUSP00000113343"/>
<dbReference type="ProteomicsDB" id="260859"/>
<dbReference type="Pumba" id="Q80ZK0"/>
<dbReference type="AGR" id="MGI:1928139"/>
<dbReference type="MGI" id="MGI:1928139">
    <property type="gene designation" value="Mrps10"/>
</dbReference>
<dbReference type="eggNOG" id="KOG3321">
    <property type="taxonomic scope" value="Eukaryota"/>
</dbReference>
<dbReference type="InParanoid" id="Q80ZK0"/>
<dbReference type="PhylomeDB" id="Q80ZK0"/>
<dbReference type="Reactome" id="R-MMU-5389840">
    <property type="pathway name" value="Mitochondrial translation elongation"/>
</dbReference>
<dbReference type="Reactome" id="R-MMU-5419276">
    <property type="pathway name" value="Mitochondrial translation termination"/>
</dbReference>
<dbReference type="Reactome" id="R-MMU-9837999">
    <property type="pathway name" value="Mitochondrial protein degradation"/>
</dbReference>
<dbReference type="ChiTaRS" id="Mrps10">
    <property type="organism name" value="mouse"/>
</dbReference>
<dbReference type="PRO" id="PR:Q80ZK0"/>
<dbReference type="Proteomes" id="UP000000589">
    <property type="component" value="Unplaced"/>
</dbReference>
<dbReference type="RNAct" id="Q80ZK0">
    <property type="molecule type" value="protein"/>
</dbReference>
<dbReference type="GO" id="GO:0005743">
    <property type="term" value="C:mitochondrial inner membrane"/>
    <property type="evidence" value="ECO:0000303"/>
    <property type="project" value="ComplexPortal"/>
</dbReference>
<dbReference type="GO" id="GO:0005763">
    <property type="term" value="C:mitochondrial small ribosomal subunit"/>
    <property type="evidence" value="ECO:0000250"/>
    <property type="project" value="UniProtKB"/>
</dbReference>
<dbReference type="GO" id="GO:0005739">
    <property type="term" value="C:mitochondrion"/>
    <property type="evidence" value="ECO:0007005"/>
    <property type="project" value="MGI"/>
</dbReference>
<dbReference type="GO" id="GO:0003735">
    <property type="term" value="F:structural constituent of ribosome"/>
    <property type="evidence" value="ECO:0000250"/>
    <property type="project" value="MGI"/>
</dbReference>
<dbReference type="GO" id="GO:0032543">
    <property type="term" value="P:mitochondrial translation"/>
    <property type="evidence" value="ECO:0000303"/>
    <property type="project" value="ComplexPortal"/>
</dbReference>
<dbReference type="FunFam" id="3.30.70.600:FF:000005">
    <property type="entry name" value="28S ribosomal protein S10, mitochondrial"/>
    <property type="match status" value="1"/>
</dbReference>
<dbReference type="Gene3D" id="3.30.70.600">
    <property type="entry name" value="Ribosomal protein S10 domain"/>
    <property type="match status" value="1"/>
</dbReference>
<dbReference type="HAMAP" id="MF_00508">
    <property type="entry name" value="Ribosomal_uS10"/>
    <property type="match status" value="1"/>
</dbReference>
<dbReference type="InterPro" id="IPR001848">
    <property type="entry name" value="Ribosomal_uS10"/>
</dbReference>
<dbReference type="InterPro" id="IPR027486">
    <property type="entry name" value="Ribosomal_uS10_dom"/>
</dbReference>
<dbReference type="InterPro" id="IPR036838">
    <property type="entry name" value="Ribosomal_uS10_dom_sf"/>
</dbReference>
<dbReference type="InterPro" id="IPR040055">
    <property type="entry name" value="Ribosomal_uS10m"/>
</dbReference>
<dbReference type="PANTHER" id="PTHR13334">
    <property type="entry name" value="MITOCHONDRIAL 28S RIBOSOMAL PROTEIN S10"/>
    <property type="match status" value="1"/>
</dbReference>
<dbReference type="PANTHER" id="PTHR13334:SF4">
    <property type="entry name" value="SMALL RIBOSOMAL SUBUNIT PROTEIN US10M"/>
    <property type="match status" value="1"/>
</dbReference>
<dbReference type="Pfam" id="PF00338">
    <property type="entry name" value="Ribosomal_S10"/>
    <property type="match status" value="1"/>
</dbReference>
<dbReference type="SMART" id="SM01403">
    <property type="entry name" value="Ribosomal_S10"/>
    <property type="match status" value="1"/>
</dbReference>
<dbReference type="SUPFAM" id="SSF54999">
    <property type="entry name" value="Ribosomal protein S10"/>
    <property type="match status" value="1"/>
</dbReference>
<organism>
    <name type="scientific">Mus musculus</name>
    <name type="common">Mouse</name>
    <dbReference type="NCBI Taxonomy" id="10090"/>
    <lineage>
        <taxon>Eukaryota</taxon>
        <taxon>Metazoa</taxon>
        <taxon>Chordata</taxon>
        <taxon>Craniata</taxon>
        <taxon>Vertebrata</taxon>
        <taxon>Euteleostomi</taxon>
        <taxon>Mammalia</taxon>
        <taxon>Eutheria</taxon>
        <taxon>Euarchontoglires</taxon>
        <taxon>Glires</taxon>
        <taxon>Rodentia</taxon>
        <taxon>Myomorpha</taxon>
        <taxon>Muroidea</taxon>
        <taxon>Muridae</taxon>
        <taxon>Murinae</taxon>
        <taxon>Mus</taxon>
        <taxon>Mus</taxon>
    </lineage>
</organism>
<reference key="1">
    <citation type="journal article" date="2004" name="Genome Res.">
        <title>The status, quality, and expansion of the NIH full-length cDNA project: the Mammalian Gene Collection (MGC).</title>
        <authorList>
            <consortium name="The MGC Project Team"/>
        </authorList>
    </citation>
    <scope>NUCLEOTIDE SEQUENCE [LARGE SCALE MRNA]</scope>
    <source>
        <strain>Czech II</strain>
        <strain>FVB/N</strain>
        <tissue>Kidney</tissue>
        <tissue>Lung</tissue>
    </source>
</reference>
<reference key="2">
    <citation type="journal article" date="2010" name="Cell">
        <title>A tissue-specific atlas of mouse protein phosphorylation and expression.</title>
        <authorList>
            <person name="Huttlin E.L."/>
            <person name="Jedrychowski M.P."/>
            <person name="Elias J.E."/>
            <person name="Goswami T."/>
            <person name="Rad R."/>
            <person name="Beausoleil S.A."/>
            <person name="Villen J."/>
            <person name="Haas W."/>
            <person name="Sowa M.E."/>
            <person name="Gygi S.P."/>
        </authorList>
    </citation>
    <scope>IDENTIFICATION BY MASS SPECTROMETRY [LARGE SCALE ANALYSIS]</scope>
    <source>
        <tissue>Brain</tissue>
        <tissue>Brown adipose tissue</tissue>
        <tissue>Heart</tissue>
        <tissue>Kidney</tissue>
        <tissue>Liver</tissue>
        <tissue>Lung</tissue>
        <tissue>Pancreas</tissue>
        <tissue>Spleen</tissue>
        <tissue>Testis</tissue>
    </source>
</reference>
<proteinExistence type="evidence at protein level"/>
<comment type="subunit">
    <text evidence="1">Component of the mitochondrial ribosome small subunit (28S) which comprises a 12S rRNA and about 30 distinct proteins.</text>
</comment>
<comment type="subcellular location">
    <subcellularLocation>
        <location evidence="1">Mitochondrion</location>
    </subcellularLocation>
</comment>
<comment type="similarity">
    <text evidence="2">Belongs to the universal ribosomal protein uS10 family.</text>
</comment>
<gene>
    <name type="primary">Mrps10</name>
</gene>
<name>RT10_MOUSE</name>
<sequence>MKWVPLSNLHVDVPKDVTRPTITTSDEPDTLYKRLSILVKAHDRAVLDSYEYFAVLAAKELGISIKVHEPPRKIERFTLLKSVHIFKKHRVQYEMRTLYRCLELKHLTGSTASVYLEYIQRNLPEGVAMEVTKTQIQQLPEHIKEPMWETVPEEKKESKS</sequence>
<feature type="chain" id="PRO_0000146676" description="Small ribosomal subunit protein uS10m">
    <location>
        <begin position="1"/>
        <end position="160"/>
    </location>
</feature>
<protein>
    <recommendedName>
        <fullName evidence="2">Small ribosomal subunit protein uS10m</fullName>
    </recommendedName>
    <alternativeName>
        <fullName>28S ribosomal protein S10, mitochondrial</fullName>
        <shortName>MRP-S10</shortName>
        <shortName>S10mt</shortName>
    </alternativeName>
</protein>